<reference key="1">
    <citation type="journal article" date="2005" name="Genome Biol.">
        <title>Full-length cDNAs from chicken bursal lymphocytes to facilitate gene function analysis.</title>
        <authorList>
            <person name="Caldwell R.B."/>
            <person name="Kierzek A.M."/>
            <person name="Arakawa H."/>
            <person name="Bezzubov Y."/>
            <person name="Zaim J."/>
            <person name="Fiedler P."/>
            <person name="Kutter S."/>
            <person name="Blagodatski A."/>
            <person name="Kostovska D."/>
            <person name="Koter M."/>
            <person name="Plachy J."/>
            <person name="Carninci P."/>
            <person name="Hayashizaki Y."/>
            <person name="Buerstedde J.-M."/>
        </authorList>
    </citation>
    <scope>NUCLEOTIDE SEQUENCE [LARGE SCALE MRNA]</scope>
    <source>
        <strain>CB</strain>
        <tissue>Bursa of Fabricius</tissue>
    </source>
</reference>
<organism>
    <name type="scientific">Gallus gallus</name>
    <name type="common">Chicken</name>
    <dbReference type="NCBI Taxonomy" id="9031"/>
    <lineage>
        <taxon>Eukaryota</taxon>
        <taxon>Metazoa</taxon>
        <taxon>Chordata</taxon>
        <taxon>Craniata</taxon>
        <taxon>Vertebrata</taxon>
        <taxon>Euteleostomi</taxon>
        <taxon>Archelosauria</taxon>
        <taxon>Archosauria</taxon>
        <taxon>Dinosauria</taxon>
        <taxon>Saurischia</taxon>
        <taxon>Theropoda</taxon>
        <taxon>Coelurosauria</taxon>
        <taxon>Aves</taxon>
        <taxon>Neognathae</taxon>
        <taxon>Galloanserae</taxon>
        <taxon>Galliformes</taxon>
        <taxon>Phasianidae</taxon>
        <taxon>Phasianinae</taxon>
        <taxon>Gallus</taxon>
    </lineage>
</organism>
<proteinExistence type="evidence at transcript level"/>
<sequence length="721" mass="82747">MAEKFESLMNIHGFDLGSRYMDLKPLGCGGNGLVFSAVDNDCDKRVAVKKIVLTDPQSVKHALREIKIIRRLDHDNIVKVFEILGPSGSQLTDDVGSLTELNCVYIVQEYMETDLANLLEQGPLLEDHARLFMYQLLRGLKYIHSANVLHRDLKPANLFINTEDLVLKIGDFGLARIMDPHYSHKGHLSEGLVTKWYRSPRLLLSPNNYTKAIDMWAAGCIFAEMLTGKTLFAGAHELEQMQLILESIPVVHEEDRQELLNVIPVYIRNDMTEPHKPLTQLLPGISPEALDFLEQILTFSPMDRLTAEEALSHPYMSIYSFPTDEPISSHPFHIEDEVDDILLMDESHSHIYNWERYHESQFSDHDWPIHNNYEADEVQRDPRALSDVTDEEEVQVDPRKYLDGDREKYLEDPAFDTHFSTEPCWQYSDHHENKYCDLECSHTCNYKMRSSSYLDNLVWRDSEVNHYYEPKLIIDLSNWKEQSKEKSDKKGKSKCEKNGLVKAQIALEEASQQLVEKEREKNQGFDFDSFIAETIQLSLQHEPTDVDKLNDLNSSVSQMESKGLISKSVSREKQEKGMANLAQLGALYQTSWESQFVSNGEECFLIDQFCCEVRKDEQVEKENTYTSYLDKFFSKKEDAEMLEPEPVEEGKLGEKERGESFLSNSGELFFNKQLEAIGIPQFHSPVGSPLKSIQATLTPSAMKSSPQIPHKTYSSILKHLN</sequence>
<dbReference type="EC" id="2.7.11.24"/>
<dbReference type="EMBL" id="AJ851537">
    <property type="protein sequence ID" value="CAH65171.1"/>
    <property type="molecule type" value="mRNA"/>
</dbReference>
<dbReference type="RefSeq" id="NP_001025720.1">
    <property type="nucleotide sequence ID" value="NM_001030549.1"/>
</dbReference>
<dbReference type="RefSeq" id="XP_015147391.1">
    <property type="nucleotide sequence ID" value="XM_015291905.1"/>
</dbReference>
<dbReference type="RefSeq" id="XP_015147392.1">
    <property type="nucleotide sequence ID" value="XM_015291906.1"/>
</dbReference>
<dbReference type="RefSeq" id="XP_015147393.1">
    <property type="nucleotide sequence ID" value="XM_015291907.1"/>
</dbReference>
<dbReference type="RefSeq" id="XP_015147394.1">
    <property type="nucleotide sequence ID" value="XM_015291908.1"/>
</dbReference>
<dbReference type="RefSeq" id="XP_015147395.1">
    <property type="nucleotide sequence ID" value="XM_015291909.1"/>
</dbReference>
<dbReference type="RefSeq" id="XP_015147396.1">
    <property type="nucleotide sequence ID" value="XM_015291910.1"/>
</dbReference>
<dbReference type="RefSeq" id="XP_015147397.1">
    <property type="nucleotide sequence ID" value="XM_015291911.1"/>
</dbReference>
<dbReference type="RefSeq" id="XP_015147399.1">
    <property type="nucleotide sequence ID" value="XM_015291913.1"/>
</dbReference>
<dbReference type="SMR" id="Q5F3W3"/>
<dbReference type="FunCoup" id="Q5F3W3">
    <property type="interactions" value="2054"/>
</dbReference>
<dbReference type="STRING" id="9031.ENSGALP00000057521"/>
<dbReference type="PaxDb" id="9031-ENSGALP00000040749"/>
<dbReference type="Ensembl" id="ENSGALT00010050735.1">
    <property type="protein sequence ID" value="ENSGALP00010029958.1"/>
    <property type="gene ID" value="ENSGALG00010020989.1"/>
</dbReference>
<dbReference type="GeneID" id="415419"/>
<dbReference type="KEGG" id="gga:415419"/>
<dbReference type="CTD" id="5596"/>
<dbReference type="VEuPathDB" id="HostDB:geneid_415419"/>
<dbReference type="eggNOG" id="KOG0660">
    <property type="taxonomic scope" value="Eukaryota"/>
</dbReference>
<dbReference type="GeneTree" id="ENSGT00940000154351"/>
<dbReference type="InParanoid" id="Q5F3W3"/>
<dbReference type="OMA" id="EADWQLH"/>
<dbReference type="OrthoDB" id="8806754at2759"/>
<dbReference type="PhylomeDB" id="Q5F3W3"/>
<dbReference type="TreeFam" id="TF105098"/>
<dbReference type="Reactome" id="R-GGA-5687128">
    <property type="pathway name" value="MAPK6/MAPK4 signaling"/>
</dbReference>
<dbReference type="PRO" id="PR:Q5F3W3"/>
<dbReference type="Proteomes" id="UP000000539">
    <property type="component" value="Chromosome 10"/>
</dbReference>
<dbReference type="Bgee" id="ENSGALG00000031448">
    <property type="expression patterns" value="Expressed in brain and 14 other cell types or tissues"/>
</dbReference>
<dbReference type="GO" id="GO:0005737">
    <property type="term" value="C:cytoplasm"/>
    <property type="evidence" value="ECO:0000318"/>
    <property type="project" value="GO_Central"/>
</dbReference>
<dbReference type="GO" id="GO:0005829">
    <property type="term" value="C:cytosol"/>
    <property type="evidence" value="ECO:0007669"/>
    <property type="project" value="Ensembl"/>
</dbReference>
<dbReference type="GO" id="GO:0005634">
    <property type="term" value="C:nucleus"/>
    <property type="evidence" value="ECO:0000318"/>
    <property type="project" value="GO_Central"/>
</dbReference>
<dbReference type="GO" id="GO:0032991">
    <property type="term" value="C:protein-containing complex"/>
    <property type="evidence" value="ECO:0007669"/>
    <property type="project" value="Ensembl"/>
</dbReference>
<dbReference type="GO" id="GO:0032156">
    <property type="term" value="C:septin cytoskeleton"/>
    <property type="evidence" value="ECO:0007669"/>
    <property type="project" value="Ensembl"/>
</dbReference>
<dbReference type="GO" id="GO:0005524">
    <property type="term" value="F:ATP binding"/>
    <property type="evidence" value="ECO:0007669"/>
    <property type="project" value="UniProtKB-KW"/>
</dbReference>
<dbReference type="GO" id="GO:0004707">
    <property type="term" value="F:MAP kinase activity"/>
    <property type="evidence" value="ECO:0007669"/>
    <property type="project" value="UniProtKB-EC"/>
</dbReference>
<dbReference type="GO" id="GO:0046982">
    <property type="term" value="F:protein heterodimerization activity"/>
    <property type="evidence" value="ECO:0007669"/>
    <property type="project" value="Ensembl"/>
</dbReference>
<dbReference type="GO" id="GO:0019901">
    <property type="term" value="F:protein kinase binding"/>
    <property type="evidence" value="ECO:0007669"/>
    <property type="project" value="Ensembl"/>
</dbReference>
<dbReference type="GO" id="GO:0106310">
    <property type="term" value="F:protein serine kinase activity"/>
    <property type="evidence" value="ECO:0007669"/>
    <property type="project" value="RHEA"/>
</dbReference>
<dbReference type="GO" id="GO:0004674">
    <property type="term" value="F:protein serine/threonine kinase activity"/>
    <property type="evidence" value="ECO:0000318"/>
    <property type="project" value="GO_Central"/>
</dbReference>
<dbReference type="GO" id="GO:0035556">
    <property type="term" value="P:intracellular signal transduction"/>
    <property type="evidence" value="ECO:0000318"/>
    <property type="project" value="GO_Central"/>
</dbReference>
<dbReference type="GO" id="GO:0060999">
    <property type="term" value="P:positive regulation of dendritic spine development"/>
    <property type="evidence" value="ECO:0007669"/>
    <property type="project" value="Ensembl"/>
</dbReference>
<dbReference type="CDD" id="cd07854">
    <property type="entry name" value="STKc_MAPK4_6"/>
    <property type="match status" value="1"/>
</dbReference>
<dbReference type="FunFam" id="3.30.200.20:FF:000223">
    <property type="entry name" value="Mitogen-activated protein kinase 6"/>
    <property type="match status" value="1"/>
</dbReference>
<dbReference type="FunFam" id="1.10.510.10:FF:000136">
    <property type="entry name" value="mitogen-activated protein kinase 6"/>
    <property type="match status" value="1"/>
</dbReference>
<dbReference type="Gene3D" id="3.30.200.20">
    <property type="entry name" value="Phosphorylase Kinase, domain 1"/>
    <property type="match status" value="1"/>
</dbReference>
<dbReference type="Gene3D" id="1.10.510.10">
    <property type="entry name" value="Transferase(Phosphotransferase) domain 1"/>
    <property type="match status" value="1"/>
</dbReference>
<dbReference type="InterPro" id="IPR011009">
    <property type="entry name" value="Kinase-like_dom_sf"/>
</dbReference>
<dbReference type="InterPro" id="IPR050117">
    <property type="entry name" value="MAP_kinase"/>
</dbReference>
<dbReference type="InterPro" id="IPR008350">
    <property type="entry name" value="MAPK_ERK3/4"/>
</dbReference>
<dbReference type="InterPro" id="IPR000719">
    <property type="entry name" value="Prot_kinase_dom"/>
</dbReference>
<dbReference type="InterPro" id="IPR017441">
    <property type="entry name" value="Protein_kinase_ATP_BS"/>
</dbReference>
<dbReference type="InterPro" id="IPR008271">
    <property type="entry name" value="Ser/Thr_kinase_AS"/>
</dbReference>
<dbReference type="PANTHER" id="PTHR24055">
    <property type="entry name" value="MITOGEN-ACTIVATED PROTEIN KINASE"/>
    <property type="match status" value="1"/>
</dbReference>
<dbReference type="Pfam" id="PF00069">
    <property type="entry name" value="Pkinase"/>
    <property type="match status" value="1"/>
</dbReference>
<dbReference type="PRINTS" id="PR01771">
    <property type="entry name" value="ERK3ERK4MAPK"/>
</dbReference>
<dbReference type="SMART" id="SM00220">
    <property type="entry name" value="S_TKc"/>
    <property type="match status" value="1"/>
</dbReference>
<dbReference type="SUPFAM" id="SSF56112">
    <property type="entry name" value="Protein kinase-like (PK-like)"/>
    <property type="match status" value="1"/>
</dbReference>
<dbReference type="PROSITE" id="PS00107">
    <property type="entry name" value="PROTEIN_KINASE_ATP"/>
    <property type="match status" value="1"/>
</dbReference>
<dbReference type="PROSITE" id="PS50011">
    <property type="entry name" value="PROTEIN_KINASE_DOM"/>
    <property type="match status" value="1"/>
</dbReference>
<dbReference type="PROSITE" id="PS00108">
    <property type="entry name" value="PROTEIN_KINASE_ST"/>
    <property type="match status" value="1"/>
</dbReference>
<accession>Q5F3W3</accession>
<comment type="function">
    <text evidence="1">Phosphorylates microtubule-associated protein 2 (MAP2). May promote entry in the cell cycle (By similarity).</text>
</comment>
<comment type="catalytic activity">
    <reaction>
        <text>L-seryl-[protein] + ATP = O-phospho-L-seryl-[protein] + ADP + H(+)</text>
        <dbReference type="Rhea" id="RHEA:17989"/>
        <dbReference type="Rhea" id="RHEA-COMP:9863"/>
        <dbReference type="Rhea" id="RHEA-COMP:11604"/>
        <dbReference type="ChEBI" id="CHEBI:15378"/>
        <dbReference type="ChEBI" id="CHEBI:29999"/>
        <dbReference type="ChEBI" id="CHEBI:30616"/>
        <dbReference type="ChEBI" id="CHEBI:83421"/>
        <dbReference type="ChEBI" id="CHEBI:456216"/>
        <dbReference type="EC" id="2.7.11.24"/>
    </reaction>
</comment>
<comment type="catalytic activity">
    <reaction>
        <text>L-threonyl-[protein] + ATP = O-phospho-L-threonyl-[protein] + ADP + H(+)</text>
        <dbReference type="Rhea" id="RHEA:46608"/>
        <dbReference type="Rhea" id="RHEA-COMP:11060"/>
        <dbReference type="Rhea" id="RHEA-COMP:11605"/>
        <dbReference type="ChEBI" id="CHEBI:15378"/>
        <dbReference type="ChEBI" id="CHEBI:30013"/>
        <dbReference type="ChEBI" id="CHEBI:30616"/>
        <dbReference type="ChEBI" id="CHEBI:61977"/>
        <dbReference type="ChEBI" id="CHEBI:456216"/>
        <dbReference type="EC" id="2.7.11.24"/>
    </reaction>
</comment>
<comment type="cofactor">
    <cofactor evidence="1">
        <name>Mg(2+)</name>
        <dbReference type="ChEBI" id="CHEBI:18420"/>
    </cofactor>
</comment>
<comment type="activity regulation">
    <text evidence="1">Activated by threonine and tyrosine phosphorylation.</text>
</comment>
<comment type="domain">
    <text>The TXY motif contains the threonine and tyrosine residues whose phosphorylation activates the MAP kinases.</text>
</comment>
<comment type="PTM">
    <text evidence="1">Dually phosphorylated on Thr-626 and Tyr-628, which activates the enzyme.</text>
</comment>
<comment type="similarity">
    <text evidence="4">Belongs to the protein kinase superfamily. CMGC Ser/Thr protein kinase family. MAP kinase subfamily.</text>
</comment>
<gene>
    <name type="primary">MAPK6</name>
    <name type="ORF">RCJMB04_5i17</name>
</gene>
<keyword id="KW-0067">ATP-binding</keyword>
<keyword id="KW-0131">Cell cycle</keyword>
<keyword id="KW-0418">Kinase</keyword>
<keyword id="KW-0547">Nucleotide-binding</keyword>
<keyword id="KW-0597">Phosphoprotein</keyword>
<keyword id="KW-1185">Reference proteome</keyword>
<keyword id="KW-0723">Serine/threonine-protein kinase</keyword>
<keyword id="KW-0808">Transferase</keyword>
<feature type="chain" id="PRO_0000249010" description="Mitogen-activated protein kinase 6">
    <location>
        <begin position="1"/>
        <end position="721"/>
    </location>
</feature>
<feature type="domain" description="Protein kinase" evidence="2">
    <location>
        <begin position="20"/>
        <end position="316"/>
    </location>
</feature>
<feature type="short sequence motif" description="TXY">
    <location>
        <begin position="626"/>
        <end position="628"/>
    </location>
</feature>
<feature type="active site" description="Proton acceptor" evidence="2 3">
    <location>
        <position position="152"/>
    </location>
</feature>
<feature type="binding site" evidence="2">
    <location>
        <begin position="26"/>
        <end position="34"/>
    </location>
    <ligand>
        <name>ATP</name>
        <dbReference type="ChEBI" id="CHEBI:30616"/>
    </ligand>
</feature>
<feature type="binding site" evidence="2">
    <location>
        <position position="49"/>
    </location>
    <ligand>
        <name>ATP</name>
        <dbReference type="ChEBI" id="CHEBI:30616"/>
    </ligand>
</feature>
<feature type="modified residue" description="Phosphothreonine" evidence="1">
    <location>
        <position position="626"/>
    </location>
</feature>
<feature type="modified residue" description="Phosphotyrosine" evidence="1">
    <location>
        <position position="628"/>
    </location>
</feature>
<protein>
    <recommendedName>
        <fullName>Mitogen-activated protein kinase 6</fullName>
        <shortName>MAP kinase 6</shortName>
        <shortName>MAPK 6</shortName>
        <ecNumber>2.7.11.24</ecNumber>
    </recommendedName>
</protein>
<evidence type="ECO:0000250" key="1"/>
<evidence type="ECO:0000255" key="2">
    <source>
        <dbReference type="PROSITE-ProRule" id="PRU00159"/>
    </source>
</evidence>
<evidence type="ECO:0000255" key="3">
    <source>
        <dbReference type="PROSITE-ProRule" id="PRU10027"/>
    </source>
</evidence>
<evidence type="ECO:0000305" key="4"/>
<name>MK06_CHICK</name>